<evidence type="ECO:0000255" key="1">
    <source>
        <dbReference type="HAMAP-Rule" id="MF_00012"/>
    </source>
</evidence>
<proteinExistence type="inferred from homology"/>
<organism>
    <name type="scientific">Streptococcus pneumoniae (strain JJA)</name>
    <dbReference type="NCBI Taxonomy" id="488222"/>
    <lineage>
        <taxon>Bacteria</taxon>
        <taxon>Bacillati</taxon>
        <taxon>Bacillota</taxon>
        <taxon>Bacilli</taxon>
        <taxon>Lactobacillales</taxon>
        <taxon>Streptococcaceae</taxon>
        <taxon>Streptococcus</taxon>
    </lineage>
</organism>
<keyword id="KW-0001">2Fe-2S</keyword>
<keyword id="KW-0028">Amino-acid biosynthesis</keyword>
<keyword id="KW-0100">Branched-chain amino acid biosynthesis</keyword>
<keyword id="KW-0408">Iron</keyword>
<keyword id="KW-0411">Iron-sulfur</keyword>
<keyword id="KW-0456">Lyase</keyword>
<keyword id="KW-0460">Magnesium</keyword>
<keyword id="KW-0479">Metal-binding</keyword>
<sequence length="567" mass="59859">MTELDKRHRSSIYDSMVKSPNRAMLRATGMTDKDFETSIVGVISTWAENTPCNIHLHDFGKLAKEGVKSAGAWPVQFGTITVADGIAMGTPGMRFSLTSRDIIADSIEAAMSGHNVDAFVAIGGCDKNMPGSMIAIANMDIPAIFAYGGTIAPGNLDGKDIDLVSVFEGIGKWNHGDMTAEDVKRLECNACPGPGGCGGMYTANTMATAIEVLGMSLPGSSSHPAESADKKEDIEAAGRAVVKMLELGLKPSDILTREAFEDAITVTMALGGSTNATLHLLAIAHAANVDLSLEDFNTIQERVPHLADLKPSGQYVFQDLYEVGGVPAVMKYLLANGFLHGDRITCTGKTVAENLADFADLTPGQKVIMPLENPKRADGPLIILNGNLAPDGAVAKVSGVKVRRHVGPAKVFDSEEDAIQAVLTDEIVDGDVVVVRFVGPKGGPGMPEMLSLSSMIVGKGQGDKVALLTDGRFSGGTYGLVVGHIAPEAQDGGPIAYLRTGDIVTVDQDTKEISMAVSEEELEKRKAETTLPPLYSRGVLGKYAHIVSSASRGAVTDFWNMDKSGKK</sequence>
<gene>
    <name evidence="1" type="primary">ilvD</name>
    <name type="ordered locus">SPJ_2151</name>
</gene>
<name>ILVD_STRZJ</name>
<comment type="function">
    <text evidence="1">Functions in the biosynthesis of branched-chain amino acids. Catalyzes the dehydration of (2R,3R)-2,3-dihydroxy-3-methylpentanoate (2,3-dihydroxy-3-methylvalerate) into 2-oxo-3-methylpentanoate (2-oxo-3-methylvalerate) and of (2R)-2,3-dihydroxy-3-methylbutanoate (2,3-dihydroxyisovalerate) into 2-oxo-3-methylbutanoate (2-oxoisovalerate), the penultimate precursor to L-isoleucine and L-valine, respectively.</text>
</comment>
<comment type="catalytic activity">
    <reaction evidence="1">
        <text>(2R)-2,3-dihydroxy-3-methylbutanoate = 3-methyl-2-oxobutanoate + H2O</text>
        <dbReference type="Rhea" id="RHEA:24809"/>
        <dbReference type="ChEBI" id="CHEBI:11851"/>
        <dbReference type="ChEBI" id="CHEBI:15377"/>
        <dbReference type="ChEBI" id="CHEBI:49072"/>
        <dbReference type="EC" id="4.2.1.9"/>
    </reaction>
    <physiologicalReaction direction="left-to-right" evidence="1">
        <dbReference type="Rhea" id="RHEA:24810"/>
    </physiologicalReaction>
</comment>
<comment type="catalytic activity">
    <reaction evidence="1">
        <text>(2R,3R)-2,3-dihydroxy-3-methylpentanoate = (S)-3-methyl-2-oxopentanoate + H2O</text>
        <dbReference type="Rhea" id="RHEA:27694"/>
        <dbReference type="ChEBI" id="CHEBI:15377"/>
        <dbReference type="ChEBI" id="CHEBI:35146"/>
        <dbReference type="ChEBI" id="CHEBI:49258"/>
        <dbReference type="EC" id="4.2.1.9"/>
    </reaction>
    <physiologicalReaction direction="left-to-right" evidence="1">
        <dbReference type="Rhea" id="RHEA:27695"/>
    </physiologicalReaction>
</comment>
<comment type="cofactor">
    <cofactor evidence="1">
        <name>[2Fe-2S] cluster</name>
        <dbReference type="ChEBI" id="CHEBI:190135"/>
    </cofactor>
    <text evidence="1">Binds 1 [2Fe-2S] cluster per subunit. This cluster acts as a Lewis acid cofactor.</text>
</comment>
<comment type="cofactor">
    <cofactor evidence="1">
        <name>Mg(2+)</name>
        <dbReference type="ChEBI" id="CHEBI:18420"/>
    </cofactor>
</comment>
<comment type="pathway">
    <text evidence="1">Amino-acid biosynthesis; L-isoleucine biosynthesis; L-isoleucine from 2-oxobutanoate: step 3/4.</text>
</comment>
<comment type="pathway">
    <text evidence="1">Amino-acid biosynthesis; L-valine biosynthesis; L-valine from pyruvate: step 3/4.</text>
</comment>
<comment type="subunit">
    <text evidence="1">Homodimer.</text>
</comment>
<comment type="similarity">
    <text evidence="1">Belongs to the IlvD/Edd family.</text>
</comment>
<protein>
    <recommendedName>
        <fullName evidence="1">Dihydroxy-acid dehydratase</fullName>
        <shortName evidence="1">DAD</shortName>
        <ecNumber evidence="1">4.2.1.9</ecNumber>
    </recommendedName>
</protein>
<accession>C1CH59</accession>
<feature type="chain" id="PRO_1000116530" description="Dihydroxy-acid dehydratase">
    <location>
        <begin position="1"/>
        <end position="567"/>
    </location>
</feature>
<feature type="active site" description="Proton acceptor" evidence="1">
    <location>
        <position position="474"/>
    </location>
</feature>
<feature type="binding site" evidence="1">
    <location>
        <position position="52"/>
    </location>
    <ligand>
        <name>[2Fe-2S] cluster</name>
        <dbReference type="ChEBI" id="CHEBI:190135"/>
    </ligand>
</feature>
<feature type="binding site" evidence="1">
    <location>
        <position position="84"/>
    </location>
    <ligand>
        <name>Mg(2+)</name>
        <dbReference type="ChEBI" id="CHEBI:18420"/>
    </ligand>
</feature>
<feature type="binding site" evidence="1">
    <location>
        <position position="125"/>
    </location>
    <ligand>
        <name>[2Fe-2S] cluster</name>
        <dbReference type="ChEBI" id="CHEBI:190135"/>
    </ligand>
</feature>
<feature type="binding site" evidence="1">
    <location>
        <position position="126"/>
    </location>
    <ligand>
        <name>Mg(2+)</name>
        <dbReference type="ChEBI" id="CHEBI:18420"/>
    </ligand>
</feature>
<feature type="binding site" description="via carbamate group" evidence="1">
    <location>
        <position position="127"/>
    </location>
    <ligand>
        <name>Mg(2+)</name>
        <dbReference type="ChEBI" id="CHEBI:18420"/>
    </ligand>
</feature>
<feature type="binding site" evidence="1">
    <location>
        <position position="197"/>
    </location>
    <ligand>
        <name>[2Fe-2S] cluster</name>
        <dbReference type="ChEBI" id="CHEBI:190135"/>
    </ligand>
</feature>
<feature type="binding site" evidence="1">
    <location>
        <position position="448"/>
    </location>
    <ligand>
        <name>Mg(2+)</name>
        <dbReference type="ChEBI" id="CHEBI:18420"/>
    </ligand>
</feature>
<feature type="modified residue" description="N6-carboxylysine" evidence="1">
    <location>
        <position position="127"/>
    </location>
</feature>
<reference key="1">
    <citation type="journal article" date="2010" name="Genome Biol.">
        <title>Structure and dynamics of the pan-genome of Streptococcus pneumoniae and closely related species.</title>
        <authorList>
            <person name="Donati C."/>
            <person name="Hiller N.L."/>
            <person name="Tettelin H."/>
            <person name="Muzzi A."/>
            <person name="Croucher N.J."/>
            <person name="Angiuoli S.V."/>
            <person name="Oggioni M."/>
            <person name="Dunning Hotopp J.C."/>
            <person name="Hu F.Z."/>
            <person name="Riley D.R."/>
            <person name="Covacci A."/>
            <person name="Mitchell T.J."/>
            <person name="Bentley S.D."/>
            <person name="Kilian M."/>
            <person name="Ehrlich G.D."/>
            <person name="Rappuoli R."/>
            <person name="Moxon E.R."/>
            <person name="Masignani V."/>
        </authorList>
    </citation>
    <scope>NUCLEOTIDE SEQUENCE [LARGE SCALE GENOMIC DNA]</scope>
    <source>
        <strain>JJA</strain>
    </source>
</reference>
<dbReference type="EC" id="4.2.1.9" evidence="1"/>
<dbReference type="EMBL" id="CP000919">
    <property type="protein sequence ID" value="ACO19160.1"/>
    <property type="molecule type" value="Genomic_DNA"/>
</dbReference>
<dbReference type="RefSeq" id="WP_000137358.1">
    <property type="nucleotide sequence ID" value="NC_012466.1"/>
</dbReference>
<dbReference type="SMR" id="C1CH59"/>
<dbReference type="KEGG" id="sjj:SPJ_2151"/>
<dbReference type="HOGENOM" id="CLU_014271_4_2_9"/>
<dbReference type="UniPathway" id="UPA00047">
    <property type="reaction ID" value="UER00057"/>
</dbReference>
<dbReference type="UniPathway" id="UPA00049">
    <property type="reaction ID" value="UER00061"/>
</dbReference>
<dbReference type="Proteomes" id="UP000002206">
    <property type="component" value="Chromosome"/>
</dbReference>
<dbReference type="GO" id="GO:0051537">
    <property type="term" value="F:2 iron, 2 sulfur cluster binding"/>
    <property type="evidence" value="ECO:0007669"/>
    <property type="project" value="UniProtKB-UniRule"/>
</dbReference>
<dbReference type="GO" id="GO:0004160">
    <property type="term" value="F:dihydroxy-acid dehydratase activity"/>
    <property type="evidence" value="ECO:0007669"/>
    <property type="project" value="UniProtKB-UniRule"/>
</dbReference>
<dbReference type="GO" id="GO:0000287">
    <property type="term" value="F:magnesium ion binding"/>
    <property type="evidence" value="ECO:0007669"/>
    <property type="project" value="UniProtKB-UniRule"/>
</dbReference>
<dbReference type="GO" id="GO:0009097">
    <property type="term" value="P:isoleucine biosynthetic process"/>
    <property type="evidence" value="ECO:0007669"/>
    <property type="project" value="UniProtKB-UniRule"/>
</dbReference>
<dbReference type="GO" id="GO:0009099">
    <property type="term" value="P:L-valine biosynthetic process"/>
    <property type="evidence" value="ECO:0007669"/>
    <property type="project" value="UniProtKB-UniRule"/>
</dbReference>
<dbReference type="FunFam" id="3.50.30.80:FF:000001">
    <property type="entry name" value="Dihydroxy-acid dehydratase"/>
    <property type="match status" value="1"/>
</dbReference>
<dbReference type="Gene3D" id="3.50.30.80">
    <property type="entry name" value="IlvD/EDD C-terminal domain-like"/>
    <property type="match status" value="1"/>
</dbReference>
<dbReference type="HAMAP" id="MF_00012">
    <property type="entry name" value="IlvD"/>
    <property type="match status" value="1"/>
</dbReference>
<dbReference type="InterPro" id="IPR050165">
    <property type="entry name" value="DHAD_IlvD/Edd"/>
</dbReference>
<dbReference type="InterPro" id="IPR042096">
    <property type="entry name" value="Dihydro-acid_dehy_C"/>
</dbReference>
<dbReference type="InterPro" id="IPR004404">
    <property type="entry name" value="DihydroxyA_deHydtase"/>
</dbReference>
<dbReference type="InterPro" id="IPR020558">
    <property type="entry name" value="DiOHA_6PGluconate_deHydtase_CS"/>
</dbReference>
<dbReference type="InterPro" id="IPR056740">
    <property type="entry name" value="ILV_EDD_C"/>
</dbReference>
<dbReference type="InterPro" id="IPR000581">
    <property type="entry name" value="ILV_EDD_N"/>
</dbReference>
<dbReference type="InterPro" id="IPR037237">
    <property type="entry name" value="IlvD/EDD_N"/>
</dbReference>
<dbReference type="NCBIfam" id="TIGR00110">
    <property type="entry name" value="ilvD"/>
    <property type="match status" value="1"/>
</dbReference>
<dbReference type="NCBIfam" id="NF002068">
    <property type="entry name" value="PRK00911.1"/>
    <property type="match status" value="1"/>
</dbReference>
<dbReference type="PANTHER" id="PTHR21000">
    <property type="entry name" value="DIHYDROXY-ACID DEHYDRATASE DAD"/>
    <property type="match status" value="1"/>
</dbReference>
<dbReference type="PANTHER" id="PTHR21000:SF5">
    <property type="entry name" value="DIHYDROXY-ACID DEHYDRATASE, MITOCHONDRIAL"/>
    <property type="match status" value="1"/>
</dbReference>
<dbReference type="Pfam" id="PF24877">
    <property type="entry name" value="ILV_EDD_C"/>
    <property type="match status" value="1"/>
</dbReference>
<dbReference type="Pfam" id="PF00920">
    <property type="entry name" value="ILVD_EDD_N"/>
    <property type="match status" value="1"/>
</dbReference>
<dbReference type="SUPFAM" id="SSF143975">
    <property type="entry name" value="IlvD/EDD N-terminal domain-like"/>
    <property type="match status" value="1"/>
</dbReference>
<dbReference type="SUPFAM" id="SSF52016">
    <property type="entry name" value="LeuD/IlvD-like"/>
    <property type="match status" value="1"/>
</dbReference>
<dbReference type="PROSITE" id="PS00886">
    <property type="entry name" value="ILVD_EDD_1"/>
    <property type="match status" value="1"/>
</dbReference>
<dbReference type="PROSITE" id="PS00887">
    <property type="entry name" value="ILVD_EDD_2"/>
    <property type="match status" value="1"/>
</dbReference>